<comment type="function">
    <text evidence="5 6">Facilitates bidirectional transport of amino acids. May act as a glutamate sensor that regulates glutamate-glutamine cycle and mTOR signaling in the brain. The transport mechanism remains to be elucidated.</text>
</comment>
<comment type="catalytic activity">
    <reaction evidence="5 6">
        <text>L-glutamate(out) = L-glutamate(in)</text>
        <dbReference type="Rhea" id="RHEA:66336"/>
        <dbReference type="ChEBI" id="CHEBI:29985"/>
    </reaction>
    <physiologicalReaction direction="left-to-right" evidence="11 12">
        <dbReference type="Rhea" id="RHEA:66337"/>
    </physiologicalReaction>
    <physiologicalReaction direction="right-to-left" evidence="11">
        <dbReference type="Rhea" id="RHEA:66338"/>
    </physiologicalReaction>
</comment>
<comment type="catalytic activity">
    <reaction evidence="5 6">
        <text>L-glutamine(out) = L-glutamine(in)</text>
        <dbReference type="Rhea" id="RHEA:73419"/>
        <dbReference type="ChEBI" id="CHEBI:58359"/>
    </reaction>
    <physiologicalReaction direction="left-to-right" evidence="11 12">
        <dbReference type="Rhea" id="RHEA:73420"/>
    </physiologicalReaction>
    <physiologicalReaction direction="right-to-left" evidence="11">
        <dbReference type="Rhea" id="RHEA:73421"/>
    </physiologicalReaction>
</comment>
<comment type="catalytic activity">
    <reaction evidence="5">
        <text>L-alanine(in) = L-alanine(out)</text>
        <dbReference type="Rhea" id="RHEA:70719"/>
        <dbReference type="ChEBI" id="CHEBI:57972"/>
    </reaction>
    <physiologicalReaction direction="left-to-right" evidence="11">
        <dbReference type="Rhea" id="RHEA:70720"/>
    </physiologicalReaction>
    <physiologicalReaction direction="right-to-left" evidence="11">
        <dbReference type="Rhea" id="RHEA:70721"/>
    </physiologicalReaction>
</comment>
<comment type="catalytic activity">
    <reaction evidence="5">
        <text>L-serine(in) = L-serine(out)</text>
        <dbReference type="Rhea" id="RHEA:35031"/>
        <dbReference type="ChEBI" id="CHEBI:33384"/>
    </reaction>
    <physiologicalReaction direction="left-to-right" evidence="11">
        <dbReference type="Rhea" id="RHEA:35032"/>
    </physiologicalReaction>
</comment>
<comment type="catalytic activity">
    <reaction evidence="6">
        <text>L-leucine(in) = L-leucine(out)</text>
        <dbReference type="Rhea" id="RHEA:73011"/>
        <dbReference type="ChEBI" id="CHEBI:57427"/>
    </reaction>
    <physiologicalReaction direction="right-to-left" evidence="12">
        <dbReference type="Rhea" id="RHEA:73013"/>
    </physiologicalReaction>
</comment>
<comment type="subcellular location">
    <subcellularLocation>
        <location evidence="11">Membrane</location>
        <topology evidence="3">Multi-pass membrane protein</topology>
    </subcellularLocation>
</comment>
<comment type="alternative products">
    <event type="alternative splicing"/>
    <isoform>
        <id>Q5I012-1</id>
        <name>1</name>
        <sequence type="displayed"/>
    </isoform>
    <isoform>
        <id>Q5I012-2</id>
        <name>2</name>
        <sequence type="described" ref="VSP_031333"/>
    </isoform>
    <isoform>
        <id>Q5I012-3</id>
        <name>3</name>
        <sequence type="described" ref="VSP_031332"/>
    </isoform>
    <isoform>
        <id>Q5I012-4</id>
        <name>4</name>
        <sequence type="described" ref="VSP_031332 VSP_031333"/>
    </isoform>
    <isoform>
        <id>Q5I012-5</id>
        <name>5</name>
        <sequence type="described" ref="VSP_031329 VSP_031330"/>
    </isoform>
    <isoform>
        <id>Q5I012-6</id>
        <name>6</name>
        <sequence type="described" ref="VSP_031328 VSP_031331"/>
    </isoform>
</comment>
<comment type="tissue specificity">
    <text evidence="5">Expressed in neurons, astrocytes and epithelial cells scattered throughout the central nervous system structures including striatum, ependyma, cerebral cortex, hippocampus, hypothalamus, thalamus, pons, and cerebellum (at protein level). Highly expressed in paraventricular hypothalamic nucleus, suprachiasmatic nucleus, anterior hypothalamic area central part, in lateral ventricule and in dorsal 3rd ventricule (at protein level). Expressed in choroid plexus epithelial cells (at protein level).</text>
</comment>
<comment type="similarity">
    <text evidence="10">Belongs to the amino acid/polyamine transporter 2 family.</text>
</comment>
<comment type="sequence caution" evidence="10">
    <conflict type="erroneous initiation">
        <sequence resource="EMBL-CDS" id="AAH43299"/>
    </conflict>
</comment>
<evidence type="ECO:0000250" key="1">
    <source>
        <dbReference type="UniProtKB" id="E9PT23"/>
    </source>
</evidence>
<evidence type="ECO:0000250" key="2">
    <source>
        <dbReference type="UniProtKB" id="Q9HBR0"/>
    </source>
</evidence>
<evidence type="ECO:0000255" key="3"/>
<evidence type="ECO:0000256" key="4">
    <source>
        <dbReference type="SAM" id="MobiDB-lite"/>
    </source>
</evidence>
<evidence type="ECO:0000269" key="5">
    <source>
    </source>
</evidence>
<evidence type="ECO:0000269" key="6">
    <source>
    </source>
</evidence>
<evidence type="ECO:0000303" key="7">
    <source>
    </source>
</evidence>
<evidence type="ECO:0000303" key="8">
    <source>
    </source>
</evidence>
<evidence type="ECO:0000303" key="9">
    <source>
    </source>
</evidence>
<evidence type="ECO:0000305" key="10"/>
<evidence type="ECO:0000305" key="11">
    <source>
    </source>
</evidence>
<evidence type="ECO:0000305" key="12">
    <source>
    </source>
</evidence>
<evidence type="ECO:0000312" key="13">
    <source>
        <dbReference type="MGI" id="MGI:1919305"/>
    </source>
</evidence>
<evidence type="ECO:0007744" key="14">
    <source>
    </source>
</evidence>
<keyword id="KW-0025">Alternative splicing</keyword>
<keyword id="KW-0029">Amino-acid transport</keyword>
<keyword id="KW-0472">Membrane</keyword>
<keyword id="KW-0597">Phosphoprotein</keyword>
<keyword id="KW-1185">Reference proteome</keyword>
<keyword id="KW-0812">Transmembrane</keyword>
<keyword id="KW-1133">Transmembrane helix</keyword>
<keyword id="KW-0813">Transport</keyword>
<sequence>MTAASTSKWGLITNVVNSIVGVSVLTMPFCFKQCGIVLGALLLVFCSWMTHQSCMFLVKSASLSKRRTYAGLAFHAYGKAGKMLVETSMIGLMLGSCITFYVVIGDLGSNFFAPLLGLQVTRTVRVFLLFAVSLFIVLPLSLQRNMMASIQSFSAMALLFYTVFMFVIVLSSLKHGLFSGQWLRQVSYIRWEGVFRCVPIFGMSFACQSQVLPTYDSLDEPSVKTMSSIFASSLNVVTAFYVMVGFFGYVSFTDATTGNVLIHFPSNPVTEMIRVGFVMSVAVGFPMMILPCRQALNTLLFEQQQKDGTFAAGGYMPPLRFKVLTLSVVFGTMVGGVMIPNVETILGFTGATMGSLICFICPALIYKKAHKNAPSAQVVLWVGLGILVVSTLTTLSVTEEAPLDLTQEARSGHRGDAEGAMKVEAARLSVQDPVVVVAEDSQEKLKPAEDKEVLEQAQIKGPVDVPGGEAPKEKQEAAQLDRPGQGIAVPMGEAHRHEPPIPHDKVVVDEGQDQEGPEEKKPPPRLPDEGDPAGRGQGAPPLPESEKEKQEPERGGEGKRPGQVLAVGETEHPQKVPEANGQPPVQPRKEDSRPGNRDPQPAAQARDSVELKALAADDGREPAQKAGGALWKPVESAAESDAGGKAGLPVQRPEAAEQREKKEAEQQGGDQAGSKLEAEIKKLVAEAGRAEMLDHAVLLQVIQEQQVQQKRLLDQQEKLLAVIEEQHKEIRQQRQEGEEDKPKPADVQPEPGVAVLRGQEEEAEHAGETLGDDPSQPLQPVLGAPRGRPAPSQDMGQHLPGEVKVLPGRDLADLPAGGSETEPQGAPIDLREDPKAAIKAAGAGKELVPGDLEAVHKAAPPEVPKSPEKQVAKAVAGQRQDVFGEGSEERKETGKEAMAPGADTQKEAVQPLVGAEAKDTKSRQSGPTKAPVQTQAKFHPEPQAIFDTGQGSHPEVRSEAPRAVHIPPEEQHKGKGGAAIQEAKQRPDPNSGPKLAVPAGQKPENAKPNRDLKVQAGSDLRRRRRDLASHPEQELAPKDGVIISFNSLPNVQVNDLRSALDTQLRQAAGAALQVVHSRQIKQLSGDLEEA</sequence>
<accession>Q5I012</accession>
<accession>A2AMZ5</accession>
<accession>Q3TVW4</accession>
<accession>Q641M1</accession>
<accession>Q80ZZ4</accession>
<accession>Q8C1Y0</accession>
<accession>Q8CCR5</accession>
<accession>Q9D8J3</accession>
<dbReference type="EMBL" id="AK007977">
    <property type="protein sequence ID" value="BAB25384.1"/>
    <property type="molecule type" value="mRNA"/>
</dbReference>
<dbReference type="EMBL" id="AK032245">
    <property type="protein sequence ID" value="BAC27777.1"/>
    <property type="molecule type" value="mRNA"/>
</dbReference>
<dbReference type="EMBL" id="AK090050">
    <property type="protein sequence ID" value="BAC41066.1"/>
    <property type="molecule type" value="mRNA"/>
</dbReference>
<dbReference type="EMBL" id="AK159948">
    <property type="protein sequence ID" value="BAE35504.1"/>
    <property type="molecule type" value="mRNA"/>
</dbReference>
<dbReference type="EMBL" id="AL807824">
    <property type="status" value="NOT_ANNOTATED_CDS"/>
    <property type="molecule type" value="Genomic_DNA"/>
</dbReference>
<dbReference type="EMBL" id="BC043299">
    <property type="protein sequence ID" value="AAH43299.1"/>
    <property type="status" value="ALT_INIT"/>
    <property type="molecule type" value="mRNA"/>
</dbReference>
<dbReference type="EMBL" id="BC082300">
    <property type="protein sequence ID" value="AAH82300.1"/>
    <property type="molecule type" value="mRNA"/>
</dbReference>
<dbReference type="EMBL" id="BC088811">
    <property type="protein sequence ID" value="AAH88811.1"/>
    <property type="molecule type" value="mRNA"/>
</dbReference>
<dbReference type="CCDS" id="CCDS25728.1">
    <molecule id="Q5I012-1"/>
</dbReference>
<dbReference type="CCDS" id="CCDS49000.1">
    <molecule id="Q5I012-3"/>
</dbReference>
<dbReference type="CCDS" id="CCDS49001.1">
    <molecule id="Q5I012-5"/>
</dbReference>
<dbReference type="CCDS" id="CCDS49002.1">
    <molecule id="Q5I012-6"/>
</dbReference>
<dbReference type="RefSeq" id="NP_001158270.1">
    <molecule id="Q5I012-2"/>
    <property type="nucleotide sequence ID" value="NM_001164798.1"/>
</dbReference>
<dbReference type="RefSeq" id="NP_001158271.1">
    <molecule id="Q5I012-3"/>
    <property type="nucleotide sequence ID" value="NM_001164799.1"/>
</dbReference>
<dbReference type="RefSeq" id="NP_001158272.1">
    <molecule id="Q5I012-4"/>
    <property type="nucleotide sequence ID" value="NM_001164800.1"/>
</dbReference>
<dbReference type="RefSeq" id="NP_001158273.1">
    <molecule id="Q5I012-6"/>
    <property type="nucleotide sequence ID" value="NM_001164801.1"/>
</dbReference>
<dbReference type="RefSeq" id="NP_001158274.1">
    <molecule id="Q5I012-5"/>
    <property type="nucleotide sequence ID" value="NM_001164802.1"/>
</dbReference>
<dbReference type="RefSeq" id="NP_077211.4">
    <molecule id="Q5I012-1"/>
    <property type="nucleotide sequence ID" value="NM_024249.5"/>
</dbReference>
<dbReference type="SMR" id="Q5I012"/>
<dbReference type="BioGRID" id="215121">
    <property type="interactions" value="3"/>
</dbReference>
<dbReference type="FunCoup" id="Q5I012">
    <property type="interactions" value="826"/>
</dbReference>
<dbReference type="STRING" id="10090.ENSMUSP00000099307"/>
<dbReference type="iPTMnet" id="Q5I012"/>
<dbReference type="PhosphoSitePlus" id="Q5I012"/>
<dbReference type="jPOST" id="Q5I012"/>
<dbReference type="PaxDb" id="10090-ENSMUSP00000099307"/>
<dbReference type="PeptideAtlas" id="Q5I012"/>
<dbReference type="ProteomicsDB" id="256893">
    <molecule id="Q5I012-1"/>
</dbReference>
<dbReference type="ProteomicsDB" id="256894">
    <molecule id="Q5I012-2"/>
</dbReference>
<dbReference type="ProteomicsDB" id="256895">
    <molecule id="Q5I012-3"/>
</dbReference>
<dbReference type="ProteomicsDB" id="256896">
    <molecule id="Q5I012-4"/>
</dbReference>
<dbReference type="ProteomicsDB" id="256897">
    <molecule id="Q5I012-5"/>
</dbReference>
<dbReference type="ProteomicsDB" id="256898">
    <molecule id="Q5I012-6"/>
</dbReference>
<dbReference type="Pumba" id="Q5I012"/>
<dbReference type="Antibodypedia" id="19805">
    <property type="antibodies" value="34 antibodies from 9 providers"/>
</dbReference>
<dbReference type="DNASU" id="72055"/>
<dbReference type="Ensembl" id="ENSMUST00000045402.14">
    <molecule id="Q5I012-3"/>
    <property type="protein sequence ID" value="ENSMUSP00000048675.8"/>
    <property type="gene ID" value="ENSMUSG00000061306.17"/>
</dbReference>
<dbReference type="Ensembl" id="ENSMUST00000053692.9">
    <molecule id="Q5I012-6"/>
    <property type="protein sequence ID" value="ENSMUSP00000057615.9"/>
    <property type="gene ID" value="ENSMUSG00000061306.17"/>
</dbReference>
<dbReference type="Ensembl" id="ENSMUST00000076697.13">
    <molecule id="Q5I012-5"/>
    <property type="protein sequence ID" value="ENSMUSP00000075989.7"/>
    <property type="gene ID" value="ENSMUSG00000061306.17"/>
</dbReference>
<dbReference type="Ensembl" id="ENSMUST00000103018.11">
    <molecule id="Q5I012-1"/>
    <property type="protein sequence ID" value="ENSMUSP00000099307.5"/>
    <property type="gene ID" value="ENSMUSG00000061306.17"/>
</dbReference>
<dbReference type="GeneID" id="72055"/>
<dbReference type="KEGG" id="mmu:72055"/>
<dbReference type="UCSC" id="uc007mrv.2">
    <molecule id="Q5I012-1"/>
    <property type="organism name" value="mouse"/>
</dbReference>
<dbReference type="UCSC" id="uc007mrw.2">
    <molecule id="Q5I012-3"/>
    <property type="organism name" value="mouse"/>
</dbReference>
<dbReference type="UCSC" id="uc007mrx.2">
    <molecule id="Q5I012-2"/>
    <property type="organism name" value="mouse"/>
</dbReference>
<dbReference type="UCSC" id="uc007mry.2">
    <molecule id="Q5I012-4"/>
    <property type="organism name" value="mouse"/>
</dbReference>
<dbReference type="UCSC" id="uc007mrz.2">
    <molecule id="Q5I012-5"/>
    <property type="organism name" value="mouse"/>
</dbReference>
<dbReference type="UCSC" id="uc007msa.2">
    <molecule id="Q5I012-6"/>
    <property type="organism name" value="mouse"/>
</dbReference>
<dbReference type="AGR" id="MGI:1919305"/>
<dbReference type="CTD" id="124565"/>
<dbReference type="MGI" id="MGI:1919305">
    <property type="gene designation" value="Slc38a10"/>
</dbReference>
<dbReference type="VEuPathDB" id="HostDB:ENSMUSG00000061306"/>
<dbReference type="eggNOG" id="KOG1305">
    <property type="taxonomic scope" value="Eukaryota"/>
</dbReference>
<dbReference type="GeneTree" id="ENSGT00940000159369"/>
<dbReference type="HOGENOM" id="CLU_009020_6_0_1"/>
<dbReference type="InParanoid" id="Q5I012"/>
<dbReference type="OMA" id="FKECGIV"/>
<dbReference type="OrthoDB" id="513400at2759"/>
<dbReference type="PhylomeDB" id="Q5I012"/>
<dbReference type="TreeFam" id="TF320116"/>
<dbReference type="BioGRID-ORCS" id="72055">
    <property type="hits" value="3 hits in 76 CRISPR screens"/>
</dbReference>
<dbReference type="ChiTaRS" id="Slc38a10">
    <property type="organism name" value="mouse"/>
</dbReference>
<dbReference type="PRO" id="PR:Q5I012"/>
<dbReference type="Proteomes" id="UP000000589">
    <property type="component" value="Chromosome 11"/>
</dbReference>
<dbReference type="RNAct" id="Q5I012">
    <property type="molecule type" value="protein"/>
</dbReference>
<dbReference type="Bgee" id="ENSMUSG00000061306">
    <property type="expression patterns" value="Expressed in motor neuron and 282 other cell types or tissues"/>
</dbReference>
<dbReference type="ExpressionAtlas" id="Q5I012">
    <property type="expression patterns" value="baseline and differential"/>
</dbReference>
<dbReference type="GO" id="GO:0005794">
    <property type="term" value="C:Golgi apparatus"/>
    <property type="evidence" value="ECO:0007669"/>
    <property type="project" value="Ensembl"/>
</dbReference>
<dbReference type="GO" id="GO:0016020">
    <property type="term" value="C:membrane"/>
    <property type="evidence" value="ECO:0007669"/>
    <property type="project" value="UniProtKB-SubCell"/>
</dbReference>
<dbReference type="GO" id="GO:0006865">
    <property type="term" value="P:amino acid transport"/>
    <property type="evidence" value="ECO:0007669"/>
    <property type="project" value="UniProtKB-KW"/>
</dbReference>
<dbReference type="GO" id="GO:0060348">
    <property type="term" value="P:bone development"/>
    <property type="evidence" value="ECO:0000315"/>
    <property type="project" value="MGI"/>
</dbReference>
<dbReference type="InterPro" id="IPR013057">
    <property type="entry name" value="AA_transpt_TM"/>
</dbReference>
<dbReference type="PANTHER" id="PTHR22950">
    <property type="entry name" value="AMINO ACID TRANSPORTER"/>
    <property type="match status" value="1"/>
</dbReference>
<dbReference type="PANTHER" id="PTHR22950:SF646">
    <property type="entry name" value="SODIUM-COUPLED NEUTRAL AMINO ACID TRANSPORTER 10-RELATED"/>
    <property type="match status" value="1"/>
</dbReference>
<dbReference type="Pfam" id="PF01490">
    <property type="entry name" value="Aa_trans"/>
    <property type="match status" value="1"/>
</dbReference>
<organism>
    <name type="scientific">Mus musculus</name>
    <name type="common">Mouse</name>
    <dbReference type="NCBI Taxonomy" id="10090"/>
    <lineage>
        <taxon>Eukaryota</taxon>
        <taxon>Metazoa</taxon>
        <taxon>Chordata</taxon>
        <taxon>Craniata</taxon>
        <taxon>Vertebrata</taxon>
        <taxon>Euteleostomi</taxon>
        <taxon>Mammalia</taxon>
        <taxon>Eutheria</taxon>
        <taxon>Euarchontoglires</taxon>
        <taxon>Glires</taxon>
        <taxon>Rodentia</taxon>
        <taxon>Myomorpha</taxon>
        <taxon>Muroidea</taxon>
        <taxon>Muridae</taxon>
        <taxon>Murinae</taxon>
        <taxon>Mus</taxon>
        <taxon>Mus</taxon>
    </lineage>
</organism>
<gene>
    <name evidence="9 13" type="primary">Slc38a10</name>
</gene>
<reference key="1">
    <citation type="journal article" date="2005" name="Science">
        <title>The transcriptional landscape of the mammalian genome.</title>
        <authorList>
            <person name="Carninci P."/>
            <person name="Kasukawa T."/>
            <person name="Katayama S."/>
            <person name="Gough J."/>
            <person name="Frith M.C."/>
            <person name="Maeda N."/>
            <person name="Oyama R."/>
            <person name="Ravasi T."/>
            <person name="Lenhard B."/>
            <person name="Wells C."/>
            <person name="Kodzius R."/>
            <person name="Shimokawa K."/>
            <person name="Bajic V.B."/>
            <person name="Brenner S.E."/>
            <person name="Batalov S."/>
            <person name="Forrest A.R."/>
            <person name="Zavolan M."/>
            <person name="Davis M.J."/>
            <person name="Wilming L.G."/>
            <person name="Aidinis V."/>
            <person name="Allen J.E."/>
            <person name="Ambesi-Impiombato A."/>
            <person name="Apweiler R."/>
            <person name="Aturaliya R.N."/>
            <person name="Bailey T.L."/>
            <person name="Bansal M."/>
            <person name="Baxter L."/>
            <person name="Beisel K.W."/>
            <person name="Bersano T."/>
            <person name="Bono H."/>
            <person name="Chalk A.M."/>
            <person name="Chiu K.P."/>
            <person name="Choudhary V."/>
            <person name="Christoffels A."/>
            <person name="Clutterbuck D.R."/>
            <person name="Crowe M.L."/>
            <person name="Dalla E."/>
            <person name="Dalrymple B.P."/>
            <person name="de Bono B."/>
            <person name="Della Gatta G."/>
            <person name="di Bernardo D."/>
            <person name="Down T."/>
            <person name="Engstrom P."/>
            <person name="Fagiolini M."/>
            <person name="Faulkner G."/>
            <person name="Fletcher C.F."/>
            <person name="Fukushima T."/>
            <person name="Furuno M."/>
            <person name="Futaki S."/>
            <person name="Gariboldi M."/>
            <person name="Georgii-Hemming P."/>
            <person name="Gingeras T.R."/>
            <person name="Gojobori T."/>
            <person name="Green R.E."/>
            <person name="Gustincich S."/>
            <person name="Harbers M."/>
            <person name="Hayashi Y."/>
            <person name="Hensch T.K."/>
            <person name="Hirokawa N."/>
            <person name="Hill D."/>
            <person name="Huminiecki L."/>
            <person name="Iacono M."/>
            <person name="Ikeo K."/>
            <person name="Iwama A."/>
            <person name="Ishikawa T."/>
            <person name="Jakt M."/>
            <person name="Kanapin A."/>
            <person name="Katoh M."/>
            <person name="Kawasawa Y."/>
            <person name="Kelso J."/>
            <person name="Kitamura H."/>
            <person name="Kitano H."/>
            <person name="Kollias G."/>
            <person name="Krishnan S.P."/>
            <person name="Kruger A."/>
            <person name="Kummerfeld S.K."/>
            <person name="Kurochkin I.V."/>
            <person name="Lareau L.F."/>
            <person name="Lazarevic D."/>
            <person name="Lipovich L."/>
            <person name="Liu J."/>
            <person name="Liuni S."/>
            <person name="McWilliam S."/>
            <person name="Madan Babu M."/>
            <person name="Madera M."/>
            <person name="Marchionni L."/>
            <person name="Matsuda H."/>
            <person name="Matsuzawa S."/>
            <person name="Miki H."/>
            <person name="Mignone F."/>
            <person name="Miyake S."/>
            <person name="Morris K."/>
            <person name="Mottagui-Tabar S."/>
            <person name="Mulder N."/>
            <person name="Nakano N."/>
            <person name="Nakauchi H."/>
            <person name="Ng P."/>
            <person name="Nilsson R."/>
            <person name="Nishiguchi S."/>
            <person name="Nishikawa S."/>
            <person name="Nori F."/>
            <person name="Ohara O."/>
            <person name="Okazaki Y."/>
            <person name="Orlando V."/>
            <person name="Pang K.C."/>
            <person name="Pavan W.J."/>
            <person name="Pavesi G."/>
            <person name="Pesole G."/>
            <person name="Petrovsky N."/>
            <person name="Piazza S."/>
            <person name="Reed J."/>
            <person name="Reid J.F."/>
            <person name="Ring B.Z."/>
            <person name="Ringwald M."/>
            <person name="Rost B."/>
            <person name="Ruan Y."/>
            <person name="Salzberg S.L."/>
            <person name="Sandelin A."/>
            <person name="Schneider C."/>
            <person name="Schoenbach C."/>
            <person name="Sekiguchi K."/>
            <person name="Semple C.A."/>
            <person name="Seno S."/>
            <person name="Sessa L."/>
            <person name="Sheng Y."/>
            <person name="Shibata Y."/>
            <person name="Shimada H."/>
            <person name="Shimada K."/>
            <person name="Silva D."/>
            <person name="Sinclair B."/>
            <person name="Sperling S."/>
            <person name="Stupka E."/>
            <person name="Sugiura K."/>
            <person name="Sultana R."/>
            <person name="Takenaka Y."/>
            <person name="Taki K."/>
            <person name="Tammoja K."/>
            <person name="Tan S.L."/>
            <person name="Tang S."/>
            <person name="Taylor M.S."/>
            <person name="Tegner J."/>
            <person name="Teichmann S.A."/>
            <person name="Ueda H.R."/>
            <person name="van Nimwegen E."/>
            <person name="Verardo R."/>
            <person name="Wei C.L."/>
            <person name="Yagi K."/>
            <person name="Yamanishi H."/>
            <person name="Zabarovsky E."/>
            <person name="Zhu S."/>
            <person name="Zimmer A."/>
            <person name="Hide W."/>
            <person name="Bult C."/>
            <person name="Grimmond S.M."/>
            <person name="Teasdale R.D."/>
            <person name="Liu E.T."/>
            <person name="Brusic V."/>
            <person name="Quackenbush J."/>
            <person name="Wahlestedt C."/>
            <person name="Mattick J.S."/>
            <person name="Hume D.A."/>
            <person name="Kai C."/>
            <person name="Sasaki D."/>
            <person name="Tomaru Y."/>
            <person name="Fukuda S."/>
            <person name="Kanamori-Katayama M."/>
            <person name="Suzuki M."/>
            <person name="Aoki J."/>
            <person name="Arakawa T."/>
            <person name="Iida J."/>
            <person name="Imamura K."/>
            <person name="Itoh M."/>
            <person name="Kato T."/>
            <person name="Kawaji H."/>
            <person name="Kawagashira N."/>
            <person name="Kawashima T."/>
            <person name="Kojima M."/>
            <person name="Kondo S."/>
            <person name="Konno H."/>
            <person name="Nakano K."/>
            <person name="Ninomiya N."/>
            <person name="Nishio T."/>
            <person name="Okada M."/>
            <person name="Plessy C."/>
            <person name="Shibata K."/>
            <person name="Shiraki T."/>
            <person name="Suzuki S."/>
            <person name="Tagami M."/>
            <person name="Waki K."/>
            <person name="Watahiki A."/>
            <person name="Okamura-Oho Y."/>
            <person name="Suzuki H."/>
            <person name="Kawai J."/>
            <person name="Hayashizaki Y."/>
        </authorList>
    </citation>
    <scope>NUCLEOTIDE SEQUENCE [LARGE SCALE MRNA] (ISOFORMS 1; 3; 5 AND 6)</scope>
    <source>
        <strain>C57BL/6J</strain>
        <tissue>Kidney</tissue>
        <tissue>Olfactory bulb</tissue>
        <tissue>Pancreas</tissue>
    </source>
</reference>
<reference key="2">
    <citation type="journal article" date="2009" name="PLoS Biol.">
        <title>Lineage-specific biology revealed by a finished genome assembly of the mouse.</title>
        <authorList>
            <person name="Church D.M."/>
            <person name="Goodstadt L."/>
            <person name="Hillier L.W."/>
            <person name="Zody M.C."/>
            <person name="Goldstein S."/>
            <person name="She X."/>
            <person name="Bult C.J."/>
            <person name="Agarwala R."/>
            <person name="Cherry J.L."/>
            <person name="DiCuccio M."/>
            <person name="Hlavina W."/>
            <person name="Kapustin Y."/>
            <person name="Meric P."/>
            <person name="Maglott D."/>
            <person name="Birtle Z."/>
            <person name="Marques A.C."/>
            <person name="Graves T."/>
            <person name="Zhou S."/>
            <person name="Teague B."/>
            <person name="Potamousis K."/>
            <person name="Churas C."/>
            <person name="Place M."/>
            <person name="Herschleb J."/>
            <person name="Runnheim R."/>
            <person name="Forrest D."/>
            <person name="Amos-Landgraf J."/>
            <person name="Schwartz D.C."/>
            <person name="Cheng Z."/>
            <person name="Lindblad-Toh K."/>
            <person name="Eichler E.E."/>
            <person name="Ponting C.P."/>
        </authorList>
    </citation>
    <scope>NUCLEOTIDE SEQUENCE [LARGE SCALE GENOMIC DNA]</scope>
    <source>
        <strain>C57BL/6J</strain>
    </source>
</reference>
<reference key="3">
    <citation type="journal article" date="2004" name="Genome Res.">
        <title>The status, quality, and expansion of the NIH full-length cDNA project: the Mammalian Gene Collection (MGC).</title>
        <authorList>
            <consortium name="The MGC Project Team"/>
        </authorList>
    </citation>
    <scope>NUCLEOTIDE SEQUENCE [LARGE SCALE MRNA] (ISOFORMS 2 AND 4)</scope>
    <scope>NUCLEOTIDE SEQUENCE [LARGE SCALE MRNA] OF 353-1090 (ISOFORM 3)</scope>
    <source>
        <strain>C57BL/6J</strain>
        <strain>FVB/N</strain>
        <tissue>Brain</tissue>
        <tissue>Colon</tissue>
        <tissue>Eye</tissue>
    </source>
</reference>
<reference key="4">
    <citation type="journal article" date="2010" name="Cell">
        <title>A tissue-specific atlas of mouse protein phosphorylation and expression.</title>
        <authorList>
            <person name="Huttlin E.L."/>
            <person name="Jedrychowski M.P."/>
            <person name="Elias J.E."/>
            <person name="Goswami T."/>
            <person name="Rad R."/>
            <person name="Beausoleil S.A."/>
            <person name="Villen J."/>
            <person name="Haas W."/>
            <person name="Sowa M.E."/>
            <person name="Gygi S.P."/>
        </authorList>
    </citation>
    <scope>PHOSPHORYLATION [LARGE SCALE ANALYSIS] AT SER-441; SER-608 AND SER-636</scope>
    <scope>IDENTIFICATION BY MASS SPECTROMETRY [LARGE SCALE ANALYSIS]</scope>
    <source>
        <tissue>Brown adipose tissue</tissue>
        <tissue>Heart</tissue>
        <tissue>Kidney</tissue>
        <tissue>Liver</tissue>
        <tissue>Lung</tissue>
        <tissue>Pancreas</tissue>
        <tissue>Spleen</tissue>
        <tissue>Testis</tissue>
    </source>
</reference>
<reference key="5">
    <citation type="journal article" date="2017" name="FEBS Open Bio">
        <title>The neuronal and astrocytic protein SLC38A10 transports glutamine, glutamate, and aspartate, suggesting a role in neurotransmission.</title>
        <authorList>
            <person name="Hellsten S.V."/>
            <person name="Haegglund M.G."/>
            <person name="Eriksson M.M."/>
            <person name="Fredriksson R."/>
        </authorList>
    </citation>
    <scope>FUNCTION</scope>
    <scope>TRANSPORTER ACTIVITY</scope>
    <scope>SUBCELLULAR LOCATION</scope>
    <scope>TISSUE SPECIFICITY</scope>
</reference>
<reference key="6">
    <citation type="journal article" date="2022" name="Front. Cell Dev. Biol.">
        <title>SLC38A10 Regulate Glutamate Homeostasis and Modulate the AKT/TSC2/mTOR Pathway in Mouse Primary Cortex Cells.</title>
        <authorList>
            <person name="Tripathi R."/>
            <person name="Aggarwal T."/>
            <person name="Lindberg F.A."/>
            <person name="Klemm A.H."/>
            <person name="Fredriksson R."/>
        </authorList>
    </citation>
    <scope>FUNCTION</scope>
    <scope>TRANSPORTER ACTIVITY</scope>
</reference>
<proteinExistence type="evidence at protein level"/>
<name>S38AA_MOUSE</name>
<feature type="chain" id="PRO_0000318976" description="Solute carrier family 38 member 10">
    <location>
        <begin position="1"/>
        <end position="1090"/>
    </location>
</feature>
<feature type="transmembrane region" description="Helical" evidence="3">
    <location>
        <begin position="9"/>
        <end position="31"/>
    </location>
</feature>
<feature type="transmembrane region" description="Helical" evidence="3">
    <location>
        <begin position="36"/>
        <end position="58"/>
    </location>
</feature>
<feature type="transmembrane region" description="Helical" evidence="3">
    <location>
        <begin position="84"/>
        <end position="104"/>
    </location>
</feature>
<feature type="transmembrane region" description="Helical" evidence="3">
    <location>
        <begin position="123"/>
        <end position="143"/>
    </location>
</feature>
<feature type="transmembrane region" description="Helical" evidence="3">
    <location>
        <begin position="153"/>
        <end position="173"/>
    </location>
</feature>
<feature type="transmembrane region" description="Helical" evidence="3">
    <location>
        <begin position="229"/>
        <end position="249"/>
    </location>
</feature>
<feature type="transmembrane region" description="Helical" evidence="3">
    <location>
        <begin position="272"/>
        <end position="292"/>
    </location>
</feature>
<feature type="transmembrane region" description="Helical" evidence="3">
    <location>
        <begin position="323"/>
        <end position="343"/>
    </location>
</feature>
<feature type="transmembrane region" description="Helical" evidence="3">
    <location>
        <begin position="345"/>
        <end position="365"/>
    </location>
</feature>
<feature type="transmembrane region" description="Helical" evidence="3">
    <location>
        <begin position="378"/>
        <end position="398"/>
    </location>
</feature>
<feature type="region of interest" description="Disordered" evidence="4">
    <location>
        <begin position="441"/>
        <end position="675"/>
    </location>
</feature>
<feature type="region of interest" description="Disordered" evidence="4">
    <location>
        <begin position="729"/>
        <end position="831"/>
    </location>
</feature>
<feature type="region of interest" description="Disordered" evidence="4">
    <location>
        <begin position="857"/>
        <end position="1037"/>
    </location>
</feature>
<feature type="compositionally biased region" description="Basic and acidic residues" evidence="4">
    <location>
        <begin position="441"/>
        <end position="454"/>
    </location>
</feature>
<feature type="compositionally biased region" description="Basic and acidic residues" evidence="4">
    <location>
        <begin position="493"/>
        <end position="508"/>
    </location>
</feature>
<feature type="compositionally biased region" description="Basic and acidic residues" evidence="4">
    <location>
        <begin position="517"/>
        <end position="528"/>
    </location>
</feature>
<feature type="compositionally biased region" description="Basic and acidic residues" evidence="4">
    <location>
        <begin position="544"/>
        <end position="560"/>
    </location>
</feature>
<feature type="compositionally biased region" description="Basic and acidic residues" evidence="4">
    <location>
        <begin position="587"/>
        <end position="596"/>
    </location>
</feature>
<feature type="compositionally biased region" description="Basic and acidic residues" evidence="4">
    <location>
        <begin position="607"/>
        <end position="623"/>
    </location>
</feature>
<feature type="compositionally biased region" description="Basic and acidic residues" evidence="4">
    <location>
        <begin position="654"/>
        <end position="665"/>
    </location>
</feature>
<feature type="compositionally biased region" description="Basic and acidic residues" evidence="4">
    <location>
        <begin position="729"/>
        <end position="744"/>
    </location>
</feature>
<feature type="compositionally biased region" description="Basic and acidic residues" evidence="4">
    <location>
        <begin position="758"/>
        <end position="767"/>
    </location>
</feature>
<feature type="compositionally biased region" description="Polar residues" evidence="4">
    <location>
        <begin position="923"/>
        <end position="936"/>
    </location>
</feature>
<feature type="compositionally biased region" description="Basic and acidic residues" evidence="4">
    <location>
        <begin position="954"/>
        <end position="973"/>
    </location>
</feature>
<feature type="compositionally biased region" description="Basic and acidic residues" evidence="4">
    <location>
        <begin position="1004"/>
        <end position="1013"/>
    </location>
</feature>
<feature type="compositionally biased region" description="Basic and acidic residues" evidence="4">
    <location>
        <begin position="1026"/>
        <end position="1037"/>
    </location>
</feature>
<feature type="modified residue" description="Phosphoserine" evidence="14">
    <location>
        <position position="441"/>
    </location>
</feature>
<feature type="modified residue" description="Phosphoserine" evidence="14">
    <location>
        <position position="608"/>
    </location>
</feature>
<feature type="modified residue" description="Phosphoserine" evidence="14">
    <location>
        <position position="636"/>
    </location>
</feature>
<feature type="modified residue" description="Phosphothreonine" evidence="2">
    <location>
        <position position="769"/>
    </location>
</feature>
<feature type="modified residue" description="Phosphoserine" evidence="1">
    <location>
        <position position="887"/>
    </location>
</feature>
<feature type="splice variant" id="VSP_031328" description="In isoform 6." evidence="8">
    <original>VVLWVGLGILVVSTLTTLSVTEEAPLDLTQEARSGHRGDAEGAMKVEAARL</original>
    <variation>DLESCRRQPSGRGCLGLSDMGGATLTTVPGPEVRANQRGMSGRAPGFISTC</variation>
    <location>
        <begin position="378"/>
        <end position="428"/>
    </location>
</feature>
<feature type="splice variant" id="VSP_031329" description="In isoform 5." evidence="8">
    <original>VVLWVGLGILVVSTLTTLSVTEEAPLDLTQE</original>
    <variation>GLPTEPWLSWYSLYRPGWPRTQGSPDSHPEC</variation>
    <location>
        <begin position="378"/>
        <end position="408"/>
    </location>
</feature>
<feature type="splice variant" id="VSP_031330" description="In isoform 5." evidence="8">
    <location>
        <begin position="409"/>
        <end position="1090"/>
    </location>
</feature>
<feature type="splice variant" id="VSP_031331" description="In isoform 6." evidence="8">
    <location>
        <begin position="429"/>
        <end position="1090"/>
    </location>
</feature>
<feature type="splice variant" id="VSP_031332" description="In isoform 3 and isoform 4." evidence="7 8">
    <location>
        <begin position="678"/>
        <end position="685"/>
    </location>
</feature>
<feature type="splice variant" id="VSP_031333" description="In isoform 2 and isoform 4." evidence="7">
    <location>
        <position position="745"/>
    </location>
</feature>
<feature type="sequence conflict" description="In Ref. 1; BAC27777." evidence="10" ref="1">
    <original>A</original>
    <variation>T</variation>
    <location>
        <position position="295"/>
    </location>
</feature>
<protein>
    <recommendedName>
        <fullName evidence="9">Solute carrier family 38 member 10</fullName>
    </recommendedName>
    <alternativeName>
        <fullName evidence="12">Amino acid transporter SLC38A10</fullName>
    </alternativeName>
</protein>